<organism>
    <name type="scientific">Solanum lycopersicum</name>
    <name type="common">Tomato</name>
    <name type="synonym">Lycopersicon esculentum</name>
    <dbReference type="NCBI Taxonomy" id="4081"/>
    <lineage>
        <taxon>Eukaryota</taxon>
        <taxon>Viridiplantae</taxon>
        <taxon>Streptophyta</taxon>
        <taxon>Embryophyta</taxon>
        <taxon>Tracheophyta</taxon>
        <taxon>Spermatophyta</taxon>
        <taxon>Magnoliopsida</taxon>
        <taxon>eudicotyledons</taxon>
        <taxon>Gunneridae</taxon>
        <taxon>Pentapetalae</taxon>
        <taxon>asterids</taxon>
        <taxon>lamiids</taxon>
        <taxon>Solanales</taxon>
        <taxon>Solanaceae</taxon>
        <taxon>Solanoideae</taxon>
        <taxon>Solaneae</taxon>
        <taxon>Solanum</taxon>
        <taxon>Solanum subgen. Lycopersicon</taxon>
    </lineage>
</organism>
<dbReference type="EMBL" id="AY531660">
    <property type="protein sequence ID" value="AAS21683.1"/>
    <property type="molecule type" value="mRNA"/>
</dbReference>
<dbReference type="EMBL" id="AY452480">
    <property type="protein sequence ID" value="AAR20885.1"/>
    <property type="molecule type" value="mRNA"/>
</dbReference>
<dbReference type="RefSeq" id="NP_001234275.1">
    <property type="nucleotide sequence ID" value="NM_001247346.1"/>
</dbReference>
<dbReference type="SMR" id="Q6QNU4"/>
<dbReference type="FunCoup" id="Q6QNU4">
    <property type="interactions" value="4470"/>
</dbReference>
<dbReference type="STRING" id="4081.Q6QNU4"/>
<dbReference type="PaxDb" id="4081-Solyc02g021650.2.1"/>
<dbReference type="GeneID" id="778355"/>
<dbReference type="KEGG" id="sly:778355"/>
<dbReference type="eggNOG" id="KOG1897">
    <property type="taxonomic scope" value="Eukaryota"/>
</dbReference>
<dbReference type="InParanoid" id="Q6QNU4"/>
<dbReference type="OrthoDB" id="433457at2759"/>
<dbReference type="UniPathway" id="UPA00143"/>
<dbReference type="Proteomes" id="UP000004994">
    <property type="component" value="Unplaced"/>
</dbReference>
<dbReference type="ExpressionAtlas" id="Q6QNU4">
    <property type="expression patterns" value="baseline and differential"/>
</dbReference>
<dbReference type="GO" id="GO:0005634">
    <property type="term" value="C:nucleus"/>
    <property type="evidence" value="ECO:0000318"/>
    <property type="project" value="GO_Central"/>
</dbReference>
<dbReference type="GO" id="GO:0003676">
    <property type="term" value="F:nucleic acid binding"/>
    <property type="evidence" value="ECO:0007669"/>
    <property type="project" value="InterPro"/>
</dbReference>
<dbReference type="GO" id="GO:0016567">
    <property type="term" value="P:protein ubiquitination"/>
    <property type="evidence" value="ECO:0007669"/>
    <property type="project" value="UniProtKB-UniPathway"/>
</dbReference>
<dbReference type="GO" id="GO:0009585">
    <property type="term" value="P:red, far-red light phototransduction"/>
    <property type="evidence" value="ECO:0007669"/>
    <property type="project" value="UniProtKB-KW"/>
</dbReference>
<dbReference type="FunFam" id="2.130.10.10:FF:000070">
    <property type="entry name" value="DNA damage-binding protein 1"/>
    <property type="match status" value="1"/>
</dbReference>
<dbReference type="FunFam" id="1.10.150.910:FF:000003">
    <property type="entry name" value="DNA damage-binding protein 1a"/>
    <property type="match status" value="1"/>
</dbReference>
<dbReference type="FunFam" id="2.130.10.10:FF:000182">
    <property type="entry name" value="DNA damage-binding protein 1a"/>
    <property type="match status" value="1"/>
</dbReference>
<dbReference type="FunFam" id="2.130.10.10:FF:000267">
    <property type="entry name" value="DNA damage-binding protein 1a"/>
    <property type="match status" value="1"/>
</dbReference>
<dbReference type="Gene3D" id="1.10.150.910">
    <property type="match status" value="1"/>
</dbReference>
<dbReference type="Gene3D" id="2.130.10.10">
    <property type="entry name" value="YVTN repeat-like/Quinoprotein amine dehydrogenase"/>
    <property type="match status" value="3"/>
</dbReference>
<dbReference type="InterPro" id="IPR018846">
    <property type="entry name" value="Beta-prop_RSE1/DDB1/CPSF1_1st"/>
</dbReference>
<dbReference type="InterPro" id="IPR004871">
    <property type="entry name" value="Cleavage/polyA-sp_fac_asu_C"/>
</dbReference>
<dbReference type="InterPro" id="IPR011047">
    <property type="entry name" value="Quinoprotein_ADH-like_sf"/>
</dbReference>
<dbReference type="InterPro" id="IPR050358">
    <property type="entry name" value="RSE1/DDB1/CFT1/CPSF1"/>
</dbReference>
<dbReference type="InterPro" id="IPR015943">
    <property type="entry name" value="WD40/YVTN_repeat-like_dom_sf"/>
</dbReference>
<dbReference type="PANTHER" id="PTHR10644">
    <property type="entry name" value="DNA REPAIR/RNA PROCESSING CPSF FAMILY"/>
    <property type="match status" value="1"/>
</dbReference>
<dbReference type="Pfam" id="PF10433">
    <property type="entry name" value="Beta-prop_RSE1_1st"/>
    <property type="match status" value="1"/>
</dbReference>
<dbReference type="Pfam" id="PF23726">
    <property type="entry name" value="Beta-prop_RSE1_2nd"/>
    <property type="match status" value="1"/>
</dbReference>
<dbReference type="Pfam" id="PF03178">
    <property type="entry name" value="CPSF_A"/>
    <property type="match status" value="1"/>
</dbReference>
<dbReference type="SUPFAM" id="SSF50998">
    <property type="entry name" value="Quinoprotein alcohol dehydrogenase-like"/>
    <property type="match status" value="1"/>
</dbReference>
<keyword id="KW-0539">Nucleus</keyword>
<keyword id="KW-0607">Phytochrome signaling pathway</keyword>
<keyword id="KW-1185">Reference proteome</keyword>
<evidence type="ECO:0000250" key="1"/>
<evidence type="ECO:0000269" key="2">
    <source>
    </source>
</evidence>
<evidence type="ECO:0000269" key="3">
    <source>
    </source>
</evidence>
<evidence type="ECO:0000305" key="4"/>
<comment type="function">
    <text evidence="3">Component of light signal transduction machinery. Involved in fruit pigmentation and fruit nutritional quality. Acts as a negative regulator of fruit pigmentation. Probably acts by participating in the CDD complex, a complex probably required to regulate the activity of ubiquitin conjugating enzymes. Repression of photomorphogenesis is probably mediated by ubiquitination and subsequent degradation of photomorphogenesis-promoting factors such as HY5.</text>
</comment>
<comment type="pathway">
    <text>Protein modification; protein ubiquitination.</text>
</comment>
<comment type="subunit">
    <text evidence="1">Probable component of the CDD complex, which probably also contains DET1.</text>
</comment>
<comment type="subcellular location">
    <subcellularLocation>
        <location evidence="1">Nucleus</location>
    </subcellularLocation>
</comment>
<comment type="miscellaneous">
    <text>The hp1 variant was originally discovered as a spontaneous mutant at the Campbell Soup company farms (Riverton, N.J.).</text>
</comment>
<comment type="similarity">
    <text evidence="4">Belongs to the DDB1 family.</text>
</comment>
<reference key="1">
    <citation type="journal article" date="2004" name="Proc. Natl. Acad. Sci. U.S.A.">
        <title>Manipulation of light signal transduction as a means of modifying fruit nutritional quality in tomato.</title>
        <authorList>
            <person name="Liu Y."/>
            <person name="Roof S."/>
            <person name="Ye Z."/>
            <person name="Barry C."/>
            <person name="van Tuinen A."/>
            <person name="Vrebalov J."/>
            <person name="Bowler C."/>
            <person name="Giovannoni J."/>
        </authorList>
    </citation>
    <scope>NUCLEOTIDE SEQUENCE [MRNA]</scope>
    <scope>FUNCTION</scope>
    <scope>VARIANT HP1 TYR-311</scope>
    <scope>MUTAGENESIS OF GLU-798</scope>
</reference>
<reference key="2">
    <citation type="journal article" date="2004" name="Theor. Appl. Genet.">
        <title>The tomato homolog of the gene encoding UV-damaged DNA binding protein 1 (DDB1) underlined as the gene that causes the high pigment-1 mutant phenotype.</title>
        <authorList>
            <person name="Lieberman M."/>
            <person name="Segev O."/>
            <person name="Gilboa N."/>
            <person name="Lalazar A."/>
            <person name="Levin I."/>
        </authorList>
    </citation>
    <scope>NUCLEOTIDE SEQUENCE [MRNA]</scope>
    <scope>VARIANT HP1 TYR-311</scope>
    <scope>MUTANT HP1W</scope>
</reference>
<gene>
    <name type="primary">DDB1</name>
    <name type="synonym">hp1</name>
</gene>
<accession>Q6QNU4</accession>
<name>DDB1_SOLLC</name>
<proteinExistence type="evidence at protein level"/>
<feature type="chain" id="PRO_0000079842" description="DNA damage-binding protein 1">
    <location>
        <begin position="1"/>
        <end position="1090"/>
    </location>
</feature>
<feature type="sequence variant" description="In hp1; induces exaggerated light responsiveness." evidence="2 3">
    <original>N</original>
    <variation>Y</variation>
    <location>
        <position position="311"/>
    </location>
</feature>
<feature type="mutagenesis site" description="In hp1w; induces exaggerated light responsiveness." evidence="3">
    <original>E</original>
    <variation>K</variation>
    <location>
        <position position="798"/>
    </location>
</feature>
<sequence>MSVWNYVVTAHKPTNVTHSCVGNFTGPQELNLIIAKCTRIEIHLLTPQGLQPMLDVPIYGRIATLELFRPHGETQDLLFIATERYKFCVLQWDTEASEVITRAMGDVSDRIGRPTDNGQIGIIDPDCRLIGLHLYDGLFKVIPFDNKGQLKEAFNIRLEELQVLDIKFLYGCPKPTIVVLYQDNKDARHVKTYEVSLKDKDFIEGPWAQNNLDNGASLLIPVPPPLCGVLIIGEETIVYCSASAFKAIPIRPSITRAYGRVDADGSRYLLGDHNGLLHLLVITHEKEKVTGLKIELLGETSIASTISYLDNAFVFIGSSYGDSQLVKLNLQPDTKGSYVEVLERYVNLGPIVDFCVVDLERQGQGQVVTCSGAYKDGSLRIVRNGIGINEQASVELQGIKGMWSLRSATDDPYDTFLVVSFISETRVLAMNLEDELEETEIEGFNSQVQTLFCHDAVYNQLVQVTSNSVRLVSSTSRDLKNEWFAPVGYSVNVATANATQVLLATGGGHLVYLEIGDGVLNEVKYAKLDYDISCLDINPIGENPNYSNIAAVGMWTDISVRIYSLPDLNLITKEQLGGEIIPRSVLMCSFEGISYLLCALGDGHLLNFVLSMSTGELTDRKKVSLGTQPITLRTFSSKDTTHVFAASDRPTVIYSSNKKLLYSNVNLKEVSHMCPFNVAAFPDSLAIAKEGELTIGTIDEIQKLHIRSIPLGEHARRISHQEQTRTFALCSVKYTQSNADDPEMHFVRLLDDQTFEFISTYPLDQFEYGCSILSCSFSDDSNVYYCIGTAYVMPEENEPTKGRILVFIVEDGKLQLIAEKETKGAVYSLNAFNGKLLAAINQKIQLYKWASREDGGSRELQTECGHHGHILALYVQTRGDFIVVGDLMKSISLLIFKHEEGAIEERARDYNANWMSAVEILDDDIYLGAENNFNLFTVRKNSEGATDEERSRLEVVGEYHLGEFVNRFRHGSLVMRLPDSDVGQIPTVIFGTVNGVIGVIASLPHDQYLFLEKLQTNLRKVIKGVGGLSHEQWRSFYNEKKTVDAKNFLDGDLIESFLDLSRNRMEEISKAMSVPVEELMKRVEELTRLH</sequence>
<protein>
    <recommendedName>
        <fullName>DNA damage-binding protein 1</fullName>
    </recommendedName>
    <alternativeName>
        <fullName>High pigmentation protein 1</fullName>
    </alternativeName>
    <alternativeName>
        <fullName>UV-damaged DNA-binding protein 1</fullName>
    </alternativeName>
</protein>